<protein>
    <recommendedName>
        <fullName>Aminodeoxychorismate synthase component 2</fullName>
        <shortName>ADC synthase</shortName>
        <shortName>ADCS</shortName>
        <ecNumber evidence="3 7">2.6.1.85</ecNumber>
    </recommendedName>
    <alternativeName>
        <fullName>4-amino-4-deoxychorismate synthase component 2</fullName>
    </alternativeName>
    <alternativeName>
        <fullName>Aminodeoxychorismate synthase, glutamine amidotransferase component</fullName>
    </alternativeName>
</protein>
<feature type="chain" id="PRO_0000056849" description="Aminodeoxychorismate synthase component 2">
    <location>
        <begin position="1"/>
        <end position="187"/>
    </location>
</feature>
<feature type="domain" description="Glutamine amidotransferase type-1" evidence="1">
    <location>
        <begin position="1"/>
        <end position="187"/>
    </location>
</feature>
<feature type="active site" evidence="8">
    <location>
        <position position="79"/>
    </location>
</feature>
<feature type="active site" evidence="8">
    <location>
        <position position="168"/>
    </location>
</feature>
<feature type="active site" evidence="8">
    <location>
        <position position="170"/>
    </location>
</feature>
<feature type="mutagenesis site" description="10000-fold decrease in catalytic efficiency." evidence="4">
    <original>C</original>
    <variation>S</variation>
    <location>
        <position position="79"/>
    </location>
</feature>
<feature type="mutagenesis site" description="Loss of activity." evidence="4">
    <original>H</original>
    <variation>Q</variation>
    <location>
        <position position="168"/>
    </location>
</feature>
<feature type="mutagenesis site" description="150-fold decrease in catalytic efficiency." evidence="4">
    <original>E</original>
    <variation>A</variation>
    <location>
        <position position="170"/>
    </location>
</feature>
<feature type="mutagenesis site" description="4-fold decrease in catalytic efficiency." evidence="4">
    <original>E</original>
    <variation>D</variation>
    <location>
        <position position="170"/>
    </location>
</feature>
<feature type="mutagenesis site" description="Loss of activity." evidence="4">
    <original>E</original>
    <variation>K</variation>
    <variation>Q</variation>
    <location>
        <position position="170"/>
    </location>
</feature>
<name>PABA_ECOLI</name>
<evidence type="ECO:0000255" key="1">
    <source>
        <dbReference type="PROSITE-ProRule" id="PRU00605"/>
    </source>
</evidence>
<evidence type="ECO:0000269" key="2">
    <source>
    </source>
</evidence>
<evidence type="ECO:0000269" key="3">
    <source>
    </source>
</evidence>
<evidence type="ECO:0000269" key="4">
    <source>
    </source>
</evidence>
<evidence type="ECO:0000269" key="5">
    <source>
    </source>
</evidence>
<evidence type="ECO:0000303" key="6">
    <source>
    </source>
</evidence>
<evidence type="ECO:0000305" key="7">
    <source>
    </source>
</evidence>
<evidence type="ECO:0000305" key="8">
    <source>
    </source>
</evidence>
<keyword id="KW-0002">3D-structure</keyword>
<keyword id="KW-0289">Folate biosynthesis</keyword>
<keyword id="KW-0315">Glutamine amidotransferase</keyword>
<keyword id="KW-1185">Reference proteome</keyword>
<keyword id="KW-0808">Transferase</keyword>
<sequence length="187" mass="20772">MILLIDNYDSFTWNLYQYFCELGADVLVKRNDALTLADIDALKPQKIVISPGPCTPDEAGISLDVIRHYAGRLPILGVCLGHQAMAQAFGGKVVRAAKVMHGKTSPITHNGEGVFRGLANPLTVTRYHSLVVEPDSLPACFDVTAWSETREIMGIRHRQWDLEGVQFHPESILSEQGHQLLANFLHR</sequence>
<proteinExistence type="evidence at protein level"/>
<reference key="1">
    <citation type="journal article" date="1983" name="J. Mol. Biol.">
        <title>Nucleotide sequence of Escherichia coli pabA and its evolutionary relationship to trp(G)D.</title>
        <authorList>
            <person name="Kaplan J.B."/>
            <person name="Nichols B.P."/>
        </authorList>
    </citation>
    <scope>NUCLEOTIDE SEQUENCE [GENOMIC DNA]</scope>
</reference>
<reference key="2">
    <citation type="journal article" date="1990" name="J. Bacteriol.">
        <title>Chromosomal organization and expression of Escherichia coli pabA.</title>
        <authorList>
            <person name="Tran P.V."/>
            <person name="Bannor T.A."/>
            <person name="Doktor S.Z."/>
            <person name="Nichols B.P."/>
        </authorList>
    </citation>
    <scope>NUCLEOTIDE SEQUENCE [GENOMIC DNA]</scope>
</reference>
<reference key="3">
    <citation type="journal article" date="1997" name="Science">
        <title>The complete genome sequence of Escherichia coli K-12.</title>
        <authorList>
            <person name="Blattner F.R."/>
            <person name="Plunkett G. III"/>
            <person name="Bloch C.A."/>
            <person name="Perna N.T."/>
            <person name="Burland V."/>
            <person name="Riley M."/>
            <person name="Collado-Vides J."/>
            <person name="Glasner J.D."/>
            <person name="Rode C.K."/>
            <person name="Mayhew G.F."/>
            <person name="Gregor J."/>
            <person name="Davis N.W."/>
            <person name="Kirkpatrick H.A."/>
            <person name="Goeden M.A."/>
            <person name="Rose D.J."/>
            <person name="Mau B."/>
            <person name="Shao Y."/>
        </authorList>
    </citation>
    <scope>NUCLEOTIDE SEQUENCE [LARGE SCALE GENOMIC DNA]</scope>
    <source>
        <strain>K12 / MG1655 / ATCC 47076</strain>
    </source>
</reference>
<reference key="4">
    <citation type="journal article" date="2006" name="Mol. Syst. Biol.">
        <title>Highly accurate genome sequences of Escherichia coli K-12 strains MG1655 and W3110.</title>
        <authorList>
            <person name="Hayashi K."/>
            <person name="Morooka N."/>
            <person name="Yamamoto Y."/>
            <person name="Fujita K."/>
            <person name="Isono K."/>
            <person name="Choi S."/>
            <person name="Ohtsubo E."/>
            <person name="Baba T."/>
            <person name="Wanner B.L."/>
            <person name="Mori H."/>
            <person name="Horiuchi T."/>
        </authorList>
    </citation>
    <scope>NUCLEOTIDE SEQUENCE [LARGE SCALE GENOMIC DNA]</scope>
    <source>
        <strain>K12 / W3110 / ATCC 27325 / DSM 5911</strain>
    </source>
</reference>
<reference key="5">
    <citation type="journal article" date="1989" name="J. Bacteriol.">
        <title>Nucleotide sequences of fic and fic-1 genes involved in cell filamentation induced by cyclic AMP in Escherichia coli.</title>
        <authorList>
            <person name="Kawamukai M."/>
            <person name="Matsuda H."/>
            <person name="Fujii W."/>
            <person name="Utsumi R."/>
            <person name="Komano T."/>
        </authorList>
    </citation>
    <scope>NUCLEOTIDE SEQUENCE [GENOMIC DNA] OF 1-150</scope>
</reference>
<reference key="6">
    <citation type="journal article" date="1970" name="J. Bacteriol.">
        <title>Biosynthesis of 4-aminobenzoate in Escherichia coli.</title>
        <authorList>
            <person name="Huang M."/>
            <person name="Gibson F."/>
        </authorList>
    </citation>
    <scope>FUNCTION</scope>
    <scope>CATALYTIC ACTIVITY</scope>
    <scope>DISRUPTION PHENOTYPE</scope>
    <scope>NOMENCLATURE</scope>
    <source>
        <strain>K12</strain>
    </source>
</reference>
<reference key="7">
    <citation type="journal article" date="1993" name="Biochemistry">
        <title>p-aminobenzoate synthesis in Escherichia coli: mutational analysis of three conserved amino acid residues of the amidotransferase PabA.</title>
        <authorList>
            <person name="Roux B."/>
            <person name="Walsh C.T."/>
        </authorList>
    </citation>
    <scope>MUTAGENESIS OF CYS-79; HIS-168 AND GLU-170</scope>
    <scope>ACTIVE SITE</scope>
</reference>
<reference key="8">
    <citation type="journal article" date="1995" name="J. Bacteriol.">
        <title>Kinetic characterization of 4-amino 4-deoxychorismate synthase from Escherichia coli.</title>
        <authorList>
            <person name="Viswanathan V.K."/>
            <person name="Green J.M."/>
            <person name="Nichols B.P."/>
        </authorList>
    </citation>
    <scope>FUNCTION</scope>
    <scope>CATALYTIC ACTIVITY</scope>
    <scope>BIOPHYSICOCHEMICAL PROPERTIES</scope>
    <scope>ACTIVITY REGULATION</scope>
</reference>
<reference key="9">
    <citation type="journal article" date="1996" name="Biochim. Biophys. Acta">
        <title>Escherichia coli aminodeoxychorismate synthase: analysis of pabB mutations affecting catalysis and subunit association.</title>
        <authorList>
            <person name="Rayl E.A."/>
            <person name="Green J.M."/>
            <person name="Nichols B.P."/>
        </authorList>
    </citation>
    <scope>SUBUNIT</scope>
</reference>
<accession>P00903</accession>
<accession>Q2M726</accession>
<gene>
    <name evidence="6" type="primary">pabA</name>
    <name type="ordered locus">b3360</name>
    <name type="ordered locus">JW3323</name>
</gene>
<comment type="function">
    <text evidence="2 3">Part of a heterodimeric complex that catalyzes the two-step biosynthesis of 4-amino-4-deoxychorismate (ADC), a precursor of p-aminobenzoate (PABA) and tetrahydrofolate. In the first step, a glutamine amidotransferase (PabA) generates ammonia as a substrate that, along with chorismate, is used in the second step, catalyzed by aminodeoxychorismate synthase (PabB) to produce ADC. PabA converts glutamine into glutamate only in the presence of stoichiometric amounts of PabB.</text>
</comment>
<comment type="catalytic activity">
    <reaction evidence="3 7">
        <text>chorismate + L-glutamine = 4-amino-4-deoxychorismate + L-glutamate</text>
        <dbReference type="Rhea" id="RHEA:11672"/>
        <dbReference type="ChEBI" id="CHEBI:29748"/>
        <dbReference type="ChEBI" id="CHEBI:29985"/>
        <dbReference type="ChEBI" id="CHEBI:58359"/>
        <dbReference type="ChEBI" id="CHEBI:58406"/>
        <dbReference type="EC" id="2.6.1.85"/>
    </reaction>
    <physiologicalReaction direction="left-to-right" evidence="3 7">
        <dbReference type="Rhea" id="RHEA:11673"/>
    </physiologicalReaction>
</comment>
<comment type="activity regulation">
    <text evidence="3">Inhibited by 6-diazo-5-oxo-L-norleucine (DON). The inhibition is competitive with glutamine, but uncompetitive with chorismate.</text>
</comment>
<comment type="biophysicochemical properties">
    <kinetics>
        <KM evidence="3">4.2 uM for chorismate (with the heterodimer PabA-PabB and glutamine as the amino donor at pH 7.5)</KM>
        <KM evidence="3">18.6 uM for chorismate (with the heterodimer PabA-PabB and ammonia as the amino donor at pH 7.5)</KM>
    </kinetics>
</comment>
<comment type="pathway">
    <text>Cofactor biosynthesis; tetrahydrofolate biosynthesis; 4-aminobenzoate from chorismate: step 1/2.</text>
</comment>
<comment type="subunit">
    <text evidence="5">Monomer. Heterodimer consisting of two non-identical subunits: a glutamine amidotransferase subunit (PabA) and a aminodeoxychorismate synthase subunit (PabB).</text>
</comment>
<comment type="disruption phenotype">
    <text evidence="2">Cells lacking this gene do not produce 4-aminobenzoate.</text>
</comment>
<dbReference type="EC" id="2.6.1.85" evidence="3 7"/>
<dbReference type="EMBL" id="M28363">
    <property type="protein sequence ID" value="AAA23774.1"/>
    <property type="molecule type" value="Genomic_DNA"/>
</dbReference>
<dbReference type="EMBL" id="K00030">
    <property type="protein sequence ID" value="AAA24260.1"/>
    <property type="molecule type" value="Genomic_DNA"/>
</dbReference>
<dbReference type="EMBL" id="M32354">
    <property type="protein sequence ID" value="AAA24264.1"/>
    <property type="molecule type" value="Genomic_DNA"/>
</dbReference>
<dbReference type="EMBL" id="U18997">
    <property type="protein sequence ID" value="AAA58157.1"/>
    <property type="molecule type" value="Genomic_DNA"/>
</dbReference>
<dbReference type="EMBL" id="U00096">
    <property type="protein sequence ID" value="AAC76385.1"/>
    <property type="molecule type" value="Genomic_DNA"/>
</dbReference>
<dbReference type="EMBL" id="AP009048">
    <property type="protein sequence ID" value="BAE77930.1"/>
    <property type="molecule type" value="Genomic_DNA"/>
</dbReference>
<dbReference type="PIR" id="A01124">
    <property type="entry name" value="AGEC2"/>
</dbReference>
<dbReference type="RefSeq" id="NP_417819.1">
    <property type="nucleotide sequence ID" value="NC_000913.3"/>
</dbReference>
<dbReference type="RefSeq" id="WP_000601847.1">
    <property type="nucleotide sequence ID" value="NZ_STEB01000004.1"/>
</dbReference>
<dbReference type="PDB" id="8RP0">
    <property type="method" value="X-ray"/>
    <property type="resolution" value="1.64 A"/>
    <property type="chains" value="AAA/BBB=1-187"/>
</dbReference>
<dbReference type="PDB" id="8RP1">
    <property type="method" value="X-ray"/>
    <property type="resolution" value="1.86 A"/>
    <property type="chains" value="AAA/BBB=1-187"/>
</dbReference>
<dbReference type="PDB" id="8RP2">
    <property type="method" value="X-ray"/>
    <property type="resolution" value="1.98 A"/>
    <property type="chains" value="AAA/BBB=1-187"/>
</dbReference>
<dbReference type="PDB" id="8RP6">
    <property type="method" value="X-ray"/>
    <property type="resolution" value="2.45 A"/>
    <property type="chains" value="AAA/BBB=1-187"/>
</dbReference>
<dbReference type="PDB" id="8RP7">
    <property type="method" value="X-ray"/>
    <property type="resolution" value="2.82 A"/>
    <property type="chains" value="AAA/BBB/CCC=1-187"/>
</dbReference>
<dbReference type="PDBsum" id="8RP0"/>
<dbReference type="PDBsum" id="8RP1"/>
<dbReference type="PDBsum" id="8RP2"/>
<dbReference type="PDBsum" id="8RP6"/>
<dbReference type="PDBsum" id="8RP7"/>
<dbReference type="SMR" id="P00903"/>
<dbReference type="BioGRID" id="4262475">
    <property type="interactions" value="91"/>
</dbReference>
<dbReference type="BioGRID" id="852184">
    <property type="interactions" value="2"/>
</dbReference>
<dbReference type="ComplexPortal" id="CPX-5245">
    <property type="entry name" value="Aminodeoxychorismate synthase complex"/>
</dbReference>
<dbReference type="DIP" id="DIP-10433N"/>
<dbReference type="FunCoup" id="P00903">
    <property type="interactions" value="358"/>
</dbReference>
<dbReference type="IntAct" id="P00903">
    <property type="interactions" value="6"/>
</dbReference>
<dbReference type="STRING" id="511145.b3360"/>
<dbReference type="MEROPS" id="C26.955"/>
<dbReference type="jPOST" id="P00903"/>
<dbReference type="PaxDb" id="511145-b3360"/>
<dbReference type="EnsemblBacteria" id="AAC76385">
    <property type="protein sequence ID" value="AAC76385"/>
    <property type="gene ID" value="b3360"/>
</dbReference>
<dbReference type="GeneID" id="75206304"/>
<dbReference type="GeneID" id="947873"/>
<dbReference type="KEGG" id="ecj:JW3323"/>
<dbReference type="KEGG" id="eco:b3360"/>
<dbReference type="KEGG" id="ecoc:C3026_18250"/>
<dbReference type="PATRIC" id="fig|1411691.4.peg.3370"/>
<dbReference type="EchoBASE" id="EB0676"/>
<dbReference type="eggNOG" id="COG0512">
    <property type="taxonomic scope" value="Bacteria"/>
</dbReference>
<dbReference type="HOGENOM" id="CLU_014340_1_2_6"/>
<dbReference type="InParanoid" id="P00903"/>
<dbReference type="OMA" id="YEVAVYQ"/>
<dbReference type="OrthoDB" id="9786812at2"/>
<dbReference type="PhylomeDB" id="P00903"/>
<dbReference type="BioCyc" id="EcoCyc:PABASYN-COMPII-MONOMER"/>
<dbReference type="BioCyc" id="MetaCyc:PABASYN-COMPII-MONOMER"/>
<dbReference type="BRENDA" id="2.6.1.85">
    <property type="organism ID" value="2026"/>
</dbReference>
<dbReference type="BRENDA" id="2.6.1.86">
    <property type="organism ID" value="2026"/>
</dbReference>
<dbReference type="SABIO-RK" id="P00903"/>
<dbReference type="UniPathway" id="UPA00077">
    <property type="reaction ID" value="UER00149"/>
</dbReference>
<dbReference type="PRO" id="PR:P00903"/>
<dbReference type="Proteomes" id="UP000000625">
    <property type="component" value="Chromosome"/>
</dbReference>
<dbReference type="GO" id="GO:0009356">
    <property type="term" value="C:aminodeoxychorismate synthase complex"/>
    <property type="evidence" value="ECO:0000314"/>
    <property type="project" value="EcoCyc"/>
</dbReference>
<dbReference type="GO" id="GO:0046820">
    <property type="term" value="F:4-amino-4-deoxychorismate synthase activity"/>
    <property type="evidence" value="ECO:0000315"/>
    <property type="project" value="UniProtKB"/>
</dbReference>
<dbReference type="GO" id="GO:0046982">
    <property type="term" value="F:protein heterodimerization activity"/>
    <property type="evidence" value="ECO:0000353"/>
    <property type="project" value="EcoCyc"/>
</dbReference>
<dbReference type="GO" id="GO:0008153">
    <property type="term" value="P:4-aminobenzoate biosynthetic process"/>
    <property type="evidence" value="ECO:0000315"/>
    <property type="project" value="EcoCyc"/>
</dbReference>
<dbReference type="GO" id="GO:0046656">
    <property type="term" value="P:folic acid biosynthetic process"/>
    <property type="evidence" value="ECO:0000314"/>
    <property type="project" value="ComplexPortal"/>
</dbReference>
<dbReference type="GO" id="GO:0000162">
    <property type="term" value="P:L-tryptophan biosynthetic process"/>
    <property type="evidence" value="ECO:0000318"/>
    <property type="project" value="GO_Central"/>
</dbReference>
<dbReference type="GO" id="GO:0046654">
    <property type="term" value="P:tetrahydrofolate biosynthetic process"/>
    <property type="evidence" value="ECO:0000314"/>
    <property type="project" value="ComplexPortal"/>
</dbReference>
<dbReference type="CDD" id="cd01743">
    <property type="entry name" value="GATase1_Anthranilate_Synthase"/>
    <property type="match status" value="1"/>
</dbReference>
<dbReference type="FunFam" id="3.40.50.880:FF:000003">
    <property type="entry name" value="Anthranilate synthase component II"/>
    <property type="match status" value="1"/>
</dbReference>
<dbReference type="Gene3D" id="3.40.50.880">
    <property type="match status" value="1"/>
</dbReference>
<dbReference type="InterPro" id="IPR050472">
    <property type="entry name" value="Anth_synth/Amidotransfase"/>
</dbReference>
<dbReference type="InterPro" id="IPR029062">
    <property type="entry name" value="Class_I_gatase-like"/>
</dbReference>
<dbReference type="InterPro" id="IPR017926">
    <property type="entry name" value="GATASE"/>
</dbReference>
<dbReference type="InterPro" id="IPR006221">
    <property type="entry name" value="TrpG/PapA_dom"/>
</dbReference>
<dbReference type="NCBIfam" id="NF005271">
    <property type="entry name" value="PRK06774.1"/>
    <property type="match status" value="1"/>
</dbReference>
<dbReference type="NCBIfam" id="NF005946">
    <property type="entry name" value="PRK08007.1"/>
    <property type="match status" value="1"/>
</dbReference>
<dbReference type="NCBIfam" id="TIGR00566">
    <property type="entry name" value="trpG_papA"/>
    <property type="match status" value="1"/>
</dbReference>
<dbReference type="PANTHER" id="PTHR43418:SF4">
    <property type="entry name" value="MULTIFUNCTIONAL TRYPTOPHAN BIOSYNTHESIS PROTEIN"/>
    <property type="match status" value="1"/>
</dbReference>
<dbReference type="PANTHER" id="PTHR43418">
    <property type="entry name" value="MULTIFUNCTIONAL TRYPTOPHAN BIOSYNTHESIS PROTEIN-RELATED"/>
    <property type="match status" value="1"/>
</dbReference>
<dbReference type="Pfam" id="PF00117">
    <property type="entry name" value="GATase"/>
    <property type="match status" value="1"/>
</dbReference>
<dbReference type="PRINTS" id="PR00097">
    <property type="entry name" value="ANTSNTHASEII"/>
</dbReference>
<dbReference type="PRINTS" id="PR00099">
    <property type="entry name" value="CPSGATASE"/>
</dbReference>
<dbReference type="PRINTS" id="PR00096">
    <property type="entry name" value="GATASE"/>
</dbReference>
<dbReference type="SUPFAM" id="SSF52317">
    <property type="entry name" value="Class I glutamine amidotransferase-like"/>
    <property type="match status" value="1"/>
</dbReference>
<dbReference type="PROSITE" id="PS51273">
    <property type="entry name" value="GATASE_TYPE_1"/>
    <property type="match status" value="1"/>
</dbReference>
<organism>
    <name type="scientific">Escherichia coli (strain K12)</name>
    <dbReference type="NCBI Taxonomy" id="83333"/>
    <lineage>
        <taxon>Bacteria</taxon>
        <taxon>Pseudomonadati</taxon>
        <taxon>Pseudomonadota</taxon>
        <taxon>Gammaproteobacteria</taxon>
        <taxon>Enterobacterales</taxon>
        <taxon>Enterobacteriaceae</taxon>
        <taxon>Escherichia</taxon>
    </lineage>
</organism>